<accession>B7L9L4</accession>
<gene>
    <name evidence="1" type="primary">nagB</name>
    <name type="ordered locus">EC55989_0664</name>
</gene>
<sequence>MRLIPLTTAEQVGKWAARHIVNRINAFKPTADRPFVLGLPTGGTPMTTYKALVEMHKAGQVSFKHVVTFNMDEYVGLPKEHPESYYSFMHRNFFDHVDIPAENINLLNGNAPDIDAECRQYEEKIRSYGKIHLFMGGVGNDGHIAFNEPASSLASRTRIKTLTHDTRVANSRFFDNDVNQVPKYALTVGVGTLLDAEEVMILVLGSQKALALQAAVEGCVNHMWTISCLQLHPKAIMVCDEPSTMELKVKTLRYFNELEAENIKGL</sequence>
<organism>
    <name type="scientific">Escherichia coli (strain 55989 / EAEC)</name>
    <dbReference type="NCBI Taxonomy" id="585055"/>
    <lineage>
        <taxon>Bacteria</taxon>
        <taxon>Pseudomonadati</taxon>
        <taxon>Pseudomonadota</taxon>
        <taxon>Gammaproteobacteria</taxon>
        <taxon>Enterobacterales</taxon>
        <taxon>Enterobacteriaceae</taxon>
        <taxon>Escherichia</taxon>
    </lineage>
</organism>
<name>NAGB_ECO55</name>
<dbReference type="EC" id="3.5.99.6" evidence="1"/>
<dbReference type="EMBL" id="CU928145">
    <property type="protein sequence ID" value="CAU96534.1"/>
    <property type="molecule type" value="Genomic_DNA"/>
</dbReference>
<dbReference type="RefSeq" id="WP_001237072.1">
    <property type="nucleotide sequence ID" value="NZ_CP028304.1"/>
</dbReference>
<dbReference type="SMR" id="B7L9L4"/>
<dbReference type="GeneID" id="93776807"/>
<dbReference type="KEGG" id="eck:EC55989_0664"/>
<dbReference type="HOGENOM" id="CLU_049611_0_1_6"/>
<dbReference type="UniPathway" id="UPA00629">
    <property type="reaction ID" value="UER00684"/>
</dbReference>
<dbReference type="Proteomes" id="UP000000746">
    <property type="component" value="Chromosome"/>
</dbReference>
<dbReference type="GO" id="GO:0005829">
    <property type="term" value="C:cytosol"/>
    <property type="evidence" value="ECO:0007669"/>
    <property type="project" value="TreeGrafter"/>
</dbReference>
<dbReference type="GO" id="GO:0004342">
    <property type="term" value="F:glucosamine-6-phosphate deaminase activity"/>
    <property type="evidence" value="ECO:0007669"/>
    <property type="project" value="UniProtKB-UniRule"/>
</dbReference>
<dbReference type="GO" id="GO:0042802">
    <property type="term" value="F:identical protein binding"/>
    <property type="evidence" value="ECO:0007669"/>
    <property type="project" value="TreeGrafter"/>
</dbReference>
<dbReference type="GO" id="GO:0005975">
    <property type="term" value="P:carbohydrate metabolic process"/>
    <property type="evidence" value="ECO:0007669"/>
    <property type="project" value="InterPro"/>
</dbReference>
<dbReference type="GO" id="GO:0006043">
    <property type="term" value="P:glucosamine catabolic process"/>
    <property type="evidence" value="ECO:0007669"/>
    <property type="project" value="TreeGrafter"/>
</dbReference>
<dbReference type="GO" id="GO:0006046">
    <property type="term" value="P:N-acetylglucosamine catabolic process"/>
    <property type="evidence" value="ECO:0007669"/>
    <property type="project" value="TreeGrafter"/>
</dbReference>
<dbReference type="GO" id="GO:0019262">
    <property type="term" value="P:N-acetylneuraminate catabolic process"/>
    <property type="evidence" value="ECO:0007669"/>
    <property type="project" value="UniProtKB-UniRule"/>
</dbReference>
<dbReference type="CDD" id="cd01399">
    <property type="entry name" value="GlcN6P_deaminase"/>
    <property type="match status" value="1"/>
</dbReference>
<dbReference type="FunFam" id="3.40.50.1360:FF:000002">
    <property type="entry name" value="Glucosamine-6-phosphate deaminase"/>
    <property type="match status" value="1"/>
</dbReference>
<dbReference type="Gene3D" id="3.40.50.1360">
    <property type="match status" value="1"/>
</dbReference>
<dbReference type="HAMAP" id="MF_01241">
    <property type="entry name" value="GlcN6P_deamin"/>
    <property type="match status" value="1"/>
</dbReference>
<dbReference type="InterPro" id="IPR006148">
    <property type="entry name" value="Glc/Gal-6P_isomerase"/>
</dbReference>
<dbReference type="InterPro" id="IPR004547">
    <property type="entry name" value="Glucosamine6P_isomerase"/>
</dbReference>
<dbReference type="InterPro" id="IPR018321">
    <property type="entry name" value="Glucosamine6P_isomerase_CS"/>
</dbReference>
<dbReference type="InterPro" id="IPR037171">
    <property type="entry name" value="NagB/RpiA_transferase-like"/>
</dbReference>
<dbReference type="NCBIfam" id="TIGR00502">
    <property type="entry name" value="nagB"/>
    <property type="match status" value="1"/>
</dbReference>
<dbReference type="NCBIfam" id="NF001685">
    <property type="entry name" value="PRK00443.1-5"/>
    <property type="match status" value="1"/>
</dbReference>
<dbReference type="PANTHER" id="PTHR11280">
    <property type="entry name" value="GLUCOSAMINE-6-PHOSPHATE ISOMERASE"/>
    <property type="match status" value="1"/>
</dbReference>
<dbReference type="PANTHER" id="PTHR11280:SF5">
    <property type="entry name" value="GLUCOSAMINE-6-PHOSPHATE ISOMERASE"/>
    <property type="match status" value="1"/>
</dbReference>
<dbReference type="Pfam" id="PF01182">
    <property type="entry name" value="Glucosamine_iso"/>
    <property type="match status" value="1"/>
</dbReference>
<dbReference type="SUPFAM" id="SSF100950">
    <property type="entry name" value="NagB/RpiA/CoA transferase-like"/>
    <property type="match status" value="1"/>
</dbReference>
<dbReference type="PROSITE" id="PS01161">
    <property type="entry name" value="GLC_GALNAC_ISOMERASE"/>
    <property type="match status" value="1"/>
</dbReference>
<reference key="1">
    <citation type="journal article" date="2009" name="PLoS Genet.">
        <title>Organised genome dynamics in the Escherichia coli species results in highly diverse adaptive paths.</title>
        <authorList>
            <person name="Touchon M."/>
            <person name="Hoede C."/>
            <person name="Tenaillon O."/>
            <person name="Barbe V."/>
            <person name="Baeriswyl S."/>
            <person name="Bidet P."/>
            <person name="Bingen E."/>
            <person name="Bonacorsi S."/>
            <person name="Bouchier C."/>
            <person name="Bouvet O."/>
            <person name="Calteau A."/>
            <person name="Chiapello H."/>
            <person name="Clermont O."/>
            <person name="Cruveiller S."/>
            <person name="Danchin A."/>
            <person name="Diard M."/>
            <person name="Dossat C."/>
            <person name="Karoui M.E."/>
            <person name="Frapy E."/>
            <person name="Garry L."/>
            <person name="Ghigo J.M."/>
            <person name="Gilles A.M."/>
            <person name="Johnson J."/>
            <person name="Le Bouguenec C."/>
            <person name="Lescat M."/>
            <person name="Mangenot S."/>
            <person name="Martinez-Jehanne V."/>
            <person name="Matic I."/>
            <person name="Nassif X."/>
            <person name="Oztas S."/>
            <person name="Petit M.A."/>
            <person name="Pichon C."/>
            <person name="Rouy Z."/>
            <person name="Ruf C.S."/>
            <person name="Schneider D."/>
            <person name="Tourret J."/>
            <person name="Vacherie B."/>
            <person name="Vallenet D."/>
            <person name="Medigue C."/>
            <person name="Rocha E.P.C."/>
            <person name="Denamur E."/>
        </authorList>
    </citation>
    <scope>NUCLEOTIDE SEQUENCE [LARGE SCALE GENOMIC DNA]</scope>
    <source>
        <strain>55989 / EAEC</strain>
    </source>
</reference>
<feature type="chain" id="PRO_1000165018" description="Glucosamine-6-phosphate deaminase">
    <location>
        <begin position="1"/>
        <end position="266"/>
    </location>
</feature>
<feature type="active site" description="Proton acceptor; for enolization step" evidence="1">
    <location>
        <position position="72"/>
    </location>
</feature>
<feature type="active site" description="For ring-opening step" evidence="1">
    <location>
        <position position="141"/>
    </location>
</feature>
<feature type="active site" description="Proton acceptor; for ring-opening step" evidence="1">
    <location>
        <position position="143"/>
    </location>
</feature>
<feature type="active site" description="For ring-opening step" evidence="1">
    <location>
        <position position="148"/>
    </location>
</feature>
<feature type="site" description="Part of the allosteric site" evidence="1">
    <location>
        <position position="151"/>
    </location>
</feature>
<feature type="site" description="Part of the allosteric site" evidence="1">
    <location>
        <position position="158"/>
    </location>
</feature>
<feature type="site" description="Part of the allosteric site" evidence="1">
    <location>
        <position position="160"/>
    </location>
</feature>
<feature type="site" description="Part of the allosteric site" evidence="1">
    <location>
        <position position="161"/>
    </location>
</feature>
<feature type="site" description="Part of the allosteric site" evidence="1">
    <location>
        <position position="254"/>
    </location>
</feature>
<feature type="disulfide bond" description="Interchain" evidence="1">
    <location>
        <position position="219"/>
    </location>
</feature>
<protein>
    <recommendedName>
        <fullName evidence="1">Glucosamine-6-phosphate deaminase</fullName>
        <ecNumber evidence="1">3.5.99.6</ecNumber>
    </recommendedName>
    <alternativeName>
        <fullName evidence="1">GlcN6P deaminase</fullName>
        <shortName evidence="1">GNPDA</shortName>
    </alternativeName>
    <alternativeName>
        <fullName evidence="1">Glucosamine-6-phosphate isomerase</fullName>
    </alternativeName>
</protein>
<comment type="function">
    <text evidence="1">Catalyzes the reversible isomerization-deamination of glucosamine 6-phosphate (GlcN6P) to form fructose 6-phosphate (Fru6P) and ammonium ion.</text>
</comment>
<comment type="catalytic activity">
    <reaction evidence="1">
        <text>alpha-D-glucosamine 6-phosphate + H2O = beta-D-fructose 6-phosphate + NH4(+)</text>
        <dbReference type="Rhea" id="RHEA:12172"/>
        <dbReference type="ChEBI" id="CHEBI:15377"/>
        <dbReference type="ChEBI" id="CHEBI:28938"/>
        <dbReference type="ChEBI" id="CHEBI:57634"/>
        <dbReference type="ChEBI" id="CHEBI:75989"/>
        <dbReference type="EC" id="3.5.99.6"/>
    </reaction>
</comment>
<comment type="activity regulation">
    <text evidence="1">Allosterically activated by N-acetylglucosamine 6-phosphate (GlcNAc6P).</text>
</comment>
<comment type="pathway">
    <text evidence="1">Amino-sugar metabolism; N-acetylneuraminate degradation; D-fructose 6-phosphate from N-acetylneuraminate: step 5/5.</text>
</comment>
<comment type="subunit">
    <text evidence="1">Homohexamer; trimer of disulfide-linked dimers.</text>
</comment>
<comment type="similarity">
    <text evidence="1">Belongs to the glucosamine/galactosamine-6-phosphate isomerase family. NagB subfamily.</text>
</comment>
<keyword id="KW-0021">Allosteric enzyme</keyword>
<keyword id="KW-0119">Carbohydrate metabolism</keyword>
<keyword id="KW-1015">Disulfide bond</keyword>
<keyword id="KW-0378">Hydrolase</keyword>
<keyword id="KW-1185">Reference proteome</keyword>
<evidence type="ECO:0000255" key="1">
    <source>
        <dbReference type="HAMAP-Rule" id="MF_01241"/>
    </source>
</evidence>
<proteinExistence type="inferred from homology"/>